<dbReference type="EC" id="2.2.1.9" evidence="1"/>
<dbReference type="EMBL" id="CP000687">
    <property type="protein sequence ID" value="ABY70335.1"/>
    <property type="molecule type" value="Genomic_DNA"/>
</dbReference>
<dbReference type="RefSeq" id="WP_012263381.1">
    <property type="nucleotide sequence ID" value="NC_010278.1"/>
</dbReference>
<dbReference type="SMR" id="B0BSH8"/>
<dbReference type="KEGG" id="apj:APJL_1785"/>
<dbReference type="HOGENOM" id="CLU_006051_3_0_6"/>
<dbReference type="UniPathway" id="UPA00079"/>
<dbReference type="UniPathway" id="UPA01057">
    <property type="reaction ID" value="UER00164"/>
</dbReference>
<dbReference type="Proteomes" id="UP000008547">
    <property type="component" value="Chromosome"/>
</dbReference>
<dbReference type="GO" id="GO:0070204">
    <property type="term" value="F:2-succinyl-5-enolpyruvyl-6-hydroxy-3-cyclohexene-1-carboxylic-acid synthase activity"/>
    <property type="evidence" value="ECO:0007669"/>
    <property type="project" value="UniProtKB-UniRule"/>
</dbReference>
<dbReference type="GO" id="GO:0000287">
    <property type="term" value="F:magnesium ion binding"/>
    <property type="evidence" value="ECO:0007669"/>
    <property type="project" value="UniProtKB-UniRule"/>
</dbReference>
<dbReference type="GO" id="GO:0030145">
    <property type="term" value="F:manganese ion binding"/>
    <property type="evidence" value="ECO:0007669"/>
    <property type="project" value="UniProtKB-UniRule"/>
</dbReference>
<dbReference type="GO" id="GO:0030976">
    <property type="term" value="F:thiamine pyrophosphate binding"/>
    <property type="evidence" value="ECO:0007669"/>
    <property type="project" value="UniProtKB-UniRule"/>
</dbReference>
<dbReference type="GO" id="GO:0009234">
    <property type="term" value="P:menaquinone biosynthetic process"/>
    <property type="evidence" value="ECO:0007669"/>
    <property type="project" value="UniProtKB-UniRule"/>
</dbReference>
<dbReference type="CDD" id="cd07037">
    <property type="entry name" value="TPP_PYR_MenD"/>
    <property type="match status" value="1"/>
</dbReference>
<dbReference type="CDD" id="cd02009">
    <property type="entry name" value="TPP_SHCHC_synthase"/>
    <property type="match status" value="1"/>
</dbReference>
<dbReference type="Gene3D" id="3.40.50.970">
    <property type="match status" value="2"/>
</dbReference>
<dbReference type="Gene3D" id="3.40.50.1220">
    <property type="entry name" value="TPP-binding domain"/>
    <property type="match status" value="1"/>
</dbReference>
<dbReference type="HAMAP" id="MF_01659">
    <property type="entry name" value="MenD"/>
    <property type="match status" value="1"/>
</dbReference>
<dbReference type="InterPro" id="IPR004433">
    <property type="entry name" value="MenaQ_synth_MenD"/>
</dbReference>
<dbReference type="InterPro" id="IPR032264">
    <property type="entry name" value="MenD_middle"/>
</dbReference>
<dbReference type="InterPro" id="IPR029061">
    <property type="entry name" value="THDP-binding"/>
</dbReference>
<dbReference type="InterPro" id="IPR012001">
    <property type="entry name" value="Thiamin_PyroP_enz_TPP-bd_dom"/>
</dbReference>
<dbReference type="InterPro" id="IPR011766">
    <property type="entry name" value="TPP_enzyme_TPP-bd"/>
</dbReference>
<dbReference type="NCBIfam" id="TIGR00173">
    <property type="entry name" value="menD"/>
    <property type="match status" value="1"/>
</dbReference>
<dbReference type="PANTHER" id="PTHR42916">
    <property type="entry name" value="2-SUCCINYL-5-ENOLPYRUVYL-6-HYDROXY-3-CYCLOHEXENE-1-CARBOXYLATE SYNTHASE"/>
    <property type="match status" value="1"/>
</dbReference>
<dbReference type="PANTHER" id="PTHR42916:SF1">
    <property type="entry name" value="PROTEIN PHYLLO, CHLOROPLASTIC"/>
    <property type="match status" value="1"/>
</dbReference>
<dbReference type="Pfam" id="PF02775">
    <property type="entry name" value="TPP_enzyme_C"/>
    <property type="match status" value="1"/>
</dbReference>
<dbReference type="Pfam" id="PF16582">
    <property type="entry name" value="TPP_enzyme_M_2"/>
    <property type="match status" value="1"/>
</dbReference>
<dbReference type="Pfam" id="PF02776">
    <property type="entry name" value="TPP_enzyme_N"/>
    <property type="match status" value="1"/>
</dbReference>
<dbReference type="PIRSF" id="PIRSF004983">
    <property type="entry name" value="MenD"/>
    <property type="match status" value="1"/>
</dbReference>
<dbReference type="SUPFAM" id="SSF52518">
    <property type="entry name" value="Thiamin diphosphate-binding fold (THDP-binding)"/>
    <property type="match status" value="2"/>
</dbReference>
<gene>
    <name evidence="1" type="primary">menD</name>
    <name type="ordered locus">APJL_1785</name>
</gene>
<accession>B0BSH8</accession>
<reference key="1">
    <citation type="journal article" date="2008" name="PLoS ONE">
        <title>Genome biology of Actinobacillus pleuropneumoniae JL03, an isolate of serotype 3 prevalent in China.</title>
        <authorList>
            <person name="Xu Z."/>
            <person name="Zhou Y."/>
            <person name="Li L."/>
            <person name="Zhou R."/>
            <person name="Xiao S."/>
            <person name="Wan Y."/>
            <person name="Zhang S."/>
            <person name="Wang K."/>
            <person name="Li W."/>
            <person name="Li L."/>
            <person name="Jin H."/>
            <person name="Kang M."/>
            <person name="Dalai B."/>
            <person name="Li T."/>
            <person name="Liu L."/>
            <person name="Cheng Y."/>
            <person name="Zhang L."/>
            <person name="Xu T."/>
            <person name="Zheng H."/>
            <person name="Pu S."/>
            <person name="Wang B."/>
            <person name="Gu W."/>
            <person name="Zhang X.L."/>
            <person name="Zhu G.-F."/>
            <person name="Wang S."/>
            <person name="Zhao G.-P."/>
            <person name="Chen H."/>
        </authorList>
    </citation>
    <scope>NUCLEOTIDE SEQUENCE [LARGE SCALE GENOMIC DNA]</scope>
    <source>
        <strain>JL03</strain>
    </source>
</reference>
<organism>
    <name type="scientific">Actinobacillus pleuropneumoniae serotype 3 (strain JL03)</name>
    <dbReference type="NCBI Taxonomy" id="434271"/>
    <lineage>
        <taxon>Bacteria</taxon>
        <taxon>Pseudomonadati</taxon>
        <taxon>Pseudomonadota</taxon>
        <taxon>Gammaproteobacteria</taxon>
        <taxon>Pasteurellales</taxon>
        <taxon>Pasteurellaceae</taxon>
        <taxon>Actinobacillus</taxon>
    </lineage>
</organism>
<protein>
    <recommendedName>
        <fullName evidence="1">2-succinyl-5-enolpyruvyl-6-hydroxy-3-cyclohexene-1-carboxylate synthase</fullName>
        <shortName evidence="1">SEPHCHC synthase</shortName>
        <ecNumber evidence="1">2.2.1.9</ecNumber>
    </recommendedName>
    <alternativeName>
        <fullName evidence="1">Menaquinone biosynthesis protein MenD</fullName>
    </alternativeName>
</protein>
<comment type="function">
    <text evidence="1">Catalyzes the thiamine diphosphate-dependent decarboxylation of 2-oxoglutarate and the subsequent addition of the resulting succinic semialdehyde-thiamine pyrophosphate anion to isochorismate to yield 2-succinyl-5-enolpyruvyl-6-hydroxy-3-cyclohexene-1-carboxylate (SEPHCHC).</text>
</comment>
<comment type="catalytic activity">
    <reaction evidence="1">
        <text>isochorismate + 2-oxoglutarate + H(+) = 5-enolpyruvoyl-6-hydroxy-2-succinyl-cyclohex-3-ene-1-carboxylate + CO2</text>
        <dbReference type="Rhea" id="RHEA:25593"/>
        <dbReference type="ChEBI" id="CHEBI:15378"/>
        <dbReference type="ChEBI" id="CHEBI:16526"/>
        <dbReference type="ChEBI" id="CHEBI:16810"/>
        <dbReference type="ChEBI" id="CHEBI:29780"/>
        <dbReference type="ChEBI" id="CHEBI:58818"/>
        <dbReference type="EC" id="2.2.1.9"/>
    </reaction>
</comment>
<comment type="cofactor">
    <cofactor evidence="1">
        <name>Mg(2+)</name>
        <dbReference type="ChEBI" id="CHEBI:18420"/>
    </cofactor>
    <cofactor evidence="1">
        <name>Mn(2+)</name>
        <dbReference type="ChEBI" id="CHEBI:29035"/>
    </cofactor>
</comment>
<comment type="cofactor">
    <cofactor evidence="1">
        <name>thiamine diphosphate</name>
        <dbReference type="ChEBI" id="CHEBI:58937"/>
    </cofactor>
    <text evidence="1">Binds 1 thiamine pyrophosphate per subunit.</text>
</comment>
<comment type="pathway">
    <text evidence="1">Quinol/quinone metabolism; 1,4-dihydroxy-2-naphthoate biosynthesis; 1,4-dihydroxy-2-naphthoate from chorismate: step 2/7.</text>
</comment>
<comment type="pathway">
    <text evidence="1">Quinol/quinone metabolism; menaquinone biosynthesis.</text>
</comment>
<comment type="subunit">
    <text evidence="1">Homodimer.</text>
</comment>
<comment type="similarity">
    <text evidence="1">Belongs to the TPP enzyme family. MenD subfamily.</text>
</comment>
<keyword id="KW-0460">Magnesium</keyword>
<keyword id="KW-0464">Manganese</keyword>
<keyword id="KW-0474">Menaquinone biosynthesis</keyword>
<keyword id="KW-0479">Metal-binding</keyword>
<keyword id="KW-0786">Thiamine pyrophosphate</keyword>
<keyword id="KW-0808">Transferase</keyword>
<evidence type="ECO:0000255" key="1">
    <source>
        <dbReference type="HAMAP-Rule" id="MF_01659"/>
    </source>
</evidence>
<proteinExistence type="inferred from homology"/>
<name>MEND_ACTPJ</name>
<feature type="chain" id="PRO_0000341694" description="2-succinyl-5-enolpyruvyl-6-hydroxy-3-cyclohexene-1-carboxylate synthase">
    <location>
        <begin position="1"/>
        <end position="568"/>
    </location>
</feature>
<sequence length="568" mass="62695">MTVSTFNRTWAKVIVNALLRYGVKHFCIAPGSRSTPLTLEALQLQQNQQAQCHSHFDERGLGFFALGIAKVTNDPVAIIVTSGTAVANLYPAIIEASLTHHKLIVLSADRPPELIGCGANQAIPQQGIFADYPIAGVNLPKPAEHYNAGWLVATIEQACITQSQQGGVVHINAPFAEPLYEADENAINTHPWLKPIQSWLINPQTKWINSQTIQSEVSMHENWDYWRTKRGVIVVGKLPVEQGIGIKAWAETLGWCLITDVQSCVDANLPYADIWLSNNTVHQRLLQADIVIQFGGQIVSKRVNKFLEAFKGEFWQVDEYSDYLNPFAHHQTRFVAKAHHFLRVHPPLRQKPWLLEPLALSQFCAGFIEQQVGGSLNEASLAHHIEEVLATSGNLFIGNSLFVRLVDALCKLPEGYPVYTNRGASGIDGLIATMAGVAKGSGQPTVGIIGDISALHDLNSVSLLNKISHPCILFVINNSGGAIFDMLPVEAQAKEQFYRLSHNYEFAPIATMFGIEYIRPFTWADLKAKLKLAYGRKGVTIVEIKVNDQDGSNLYKSLVKQISQAEIA</sequence>